<protein>
    <recommendedName>
        <fullName evidence="1">SsrA-binding protein</fullName>
    </recommendedName>
    <alternativeName>
        <fullName evidence="1">Small protein B</fullName>
    </alternativeName>
</protein>
<dbReference type="EMBL" id="CP000113">
    <property type="protein sequence ID" value="ABF92409.1"/>
    <property type="molecule type" value="Genomic_DNA"/>
</dbReference>
<dbReference type="RefSeq" id="WP_011552141.1">
    <property type="nucleotide sequence ID" value="NC_008095.1"/>
</dbReference>
<dbReference type="SMR" id="Q1DAN7"/>
<dbReference type="STRING" id="246197.MXAN_2057"/>
<dbReference type="EnsemblBacteria" id="ABF92409">
    <property type="protein sequence ID" value="ABF92409"/>
    <property type="gene ID" value="MXAN_2057"/>
</dbReference>
<dbReference type="GeneID" id="41359466"/>
<dbReference type="KEGG" id="mxa:MXAN_2057"/>
<dbReference type="eggNOG" id="COG0691">
    <property type="taxonomic scope" value="Bacteria"/>
</dbReference>
<dbReference type="HOGENOM" id="CLU_108953_0_1_7"/>
<dbReference type="OrthoDB" id="9805462at2"/>
<dbReference type="Proteomes" id="UP000002402">
    <property type="component" value="Chromosome"/>
</dbReference>
<dbReference type="GO" id="GO:0005829">
    <property type="term" value="C:cytosol"/>
    <property type="evidence" value="ECO:0007669"/>
    <property type="project" value="TreeGrafter"/>
</dbReference>
<dbReference type="GO" id="GO:0003723">
    <property type="term" value="F:RNA binding"/>
    <property type="evidence" value="ECO:0007669"/>
    <property type="project" value="UniProtKB-UniRule"/>
</dbReference>
<dbReference type="GO" id="GO:0070929">
    <property type="term" value="P:trans-translation"/>
    <property type="evidence" value="ECO:0007669"/>
    <property type="project" value="UniProtKB-UniRule"/>
</dbReference>
<dbReference type="CDD" id="cd09294">
    <property type="entry name" value="SmpB"/>
    <property type="match status" value="1"/>
</dbReference>
<dbReference type="Gene3D" id="2.40.280.10">
    <property type="match status" value="1"/>
</dbReference>
<dbReference type="HAMAP" id="MF_00023">
    <property type="entry name" value="SmpB"/>
    <property type="match status" value="1"/>
</dbReference>
<dbReference type="InterPro" id="IPR023620">
    <property type="entry name" value="SmpB"/>
</dbReference>
<dbReference type="InterPro" id="IPR000037">
    <property type="entry name" value="SsrA-bd_prot"/>
</dbReference>
<dbReference type="InterPro" id="IPR020081">
    <property type="entry name" value="SsrA-bd_prot_CS"/>
</dbReference>
<dbReference type="NCBIfam" id="NF003843">
    <property type="entry name" value="PRK05422.1"/>
    <property type="match status" value="1"/>
</dbReference>
<dbReference type="NCBIfam" id="TIGR00086">
    <property type="entry name" value="smpB"/>
    <property type="match status" value="1"/>
</dbReference>
<dbReference type="PANTHER" id="PTHR30308:SF2">
    <property type="entry name" value="SSRA-BINDING PROTEIN"/>
    <property type="match status" value="1"/>
</dbReference>
<dbReference type="PANTHER" id="PTHR30308">
    <property type="entry name" value="TMRNA-BINDING COMPONENT OF TRANS-TRANSLATION TAGGING COMPLEX"/>
    <property type="match status" value="1"/>
</dbReference>
<dbReference type="Pfam" id="PF01668">
    <property type="entry name" value="SmpB"/>
    <property type="match status" value="1"/>
</dbReference>
<dbReference type="SUPFAM" id="SSF74982">
    <property type="entry name" value="Small protein B (SmpB)"/>
    <property type="match status" value="1"/>
</dbReference>
<dbReference type="PROSITE" id="PS01317">
    <property type="entry name" value="SSRP"/>
    <property type="match status" value="1"/>
</dbReference>
<feature type="chain" id="PRO_0000331068" description="SsrA-binding protein">
    <location>
        <begin position="1"/>
        <end position="162"/>
    </location>
</feature>
<feature type="region of interest" description="Disordered" evidence="2">
    <location>
        <begin position="140"/>
        <end position="162"/>
    </location>
</feature>
<comment type="function">
    <text evidence="1">Required for rescue of stalled ribosomes mediated by trans-translation. Binds to transfer-messenger RNA (tmRNA), required for stable association of tmRNA with ribosomes. tmRNA and SmpB together mimic tRNA shape, replacing the anticodon stem-loop with SmpB. tmRNA is encoded by the ssrA gene; the 2 termini fold to resemble tRNA(Ala) and it encodes a 'tag peptide', a short internal open reading frame. During trans-translation Ala-aminoacylated tmRNA acts like a tRNA, entering the A-site of stalled ribosomes, displacing the stalled mRNA. The ribosome then switches to translate the ORF on the tmRNA; the nascent peptide is terminated with the 'tag peptide' encoded by the tmRNA and targeted for degradation. The ribosome is freed to recommence translation, which seems to be the essential function of trans-translation.</text>
</comment>
<comment type="subcellular location">
    <subcellularLocation>
        <location evidence="1">Cytoplasm</location>
    </subcellularLocation>
    <text evidence="1">The tmRNA-SmpB complex associates with stalled 70S ribosomes.</text>
</comment>
<comment type="similarity">
    <text evidence="1">Belongs to the SmpB family.</text>
</comment>
<proteinExistence type="inferred from homology"/>
<accession>Q1DAN7</accession>
<sequence length="162" mass="18405">MTSGGKSKGVGSEPGVRVIAENRRARFDYTVDEKVEAGLALTGSEVKSLRDGIANLSDAYALPKGDELFLLNANIGSYKAASFFDHLPTRGRKLLMHRGEIDRWTAKVRERGYSIIPLVLYFRNGRAKVELGLCRGKTHEDRRHDIKERETKREMDRAMRRR</sequence>
<reference key="1">
    <citation type="journal article" date="2006" name="Proc. Natl. Acad. Sci. U.S.A.">
        <title>Evolution of sensory complexity recorded in a myxobacterial genome.</title>
        <authorList>
            <person name="Goldman B.S."/>
            <person name="Nierman W.C."/>
            <person name="Kaiser D."/>
            <person name="Slater S.C."/>
            <person name="Durkin A.S."/>
            <person name="Eisen J.A."/>
            <person name="Ronning C.M."/>
            <person name="Barbazuk W.B."/>
            <person name="Blanchard M."/>
            <person name="Field C."/>
            <person name="Halling C."/>
            <person name="Hinkle G."/>
            <person name="Iartchuk O."/>
            <person name="Kim H.S."/>
            <person name="Mackenzie C."/>
            <person name="Madupu R."/>
            <person name="Miller N."/>
            <person name="Shvartsbeyn A."/>
            <person name="Sullivan S.A."/>
            <person name="Vaudin M."/>
            <person name="Wiegand R."/>
            <person name="Kaplan H.B."/>
        </authorList>
    </citation>
    <scope>NUCLEOTIDE SEQUENCE [LARGE SCALE GENOMIC DNA]</scope>
    <source>
        <strain>DK1622</strain>
    </source>
</reference>
<evidence type="ECO:0000255" key="1">
    <source>
        <dbReference type="HAMAP-Rule" id="MF_00023"/>
    </source>
</evidence>
<evidence type="ECO:0000256" key="2">
    <source>
        <dbReference type="SAM" id="MobiDB-lite"/>
    </source>
</evidence>
<name>SSRP_MYXXD</name>
<gene>
    <name evidence="1" type="primary">smpB</name>
    <name type="ordered locus">MXAN_2057</name>
</gene>
<organism>
    <name type="scientific">Myxococcus xanthus (strain DK1622)</name>
    <dbReference type="NCBI Taxonomy" id="246197"/>
    <lineage>
        <taxon>Bacteria</taxon>
        <taxon>Pseudomonadati</taxon>
        <taxon>Myxococcota</taxon>
        <taxon>Myxococcia</taxon>
        <taxon>Myxococcales</taxon>
        <taxon>Cystobacterineae</taxon>
        <taxon>Myxococcaceae</taxon>
        <taxon>Myxococcus</taxon>
    </lineage>
</organism>
<keyword id="KW-0963">Cytoplasm</keyword>
<keyword id="KW-1185">Reference proteome</keyword>
<keyword id="KW-0694">RNA-binding</keyword>